<evidence type="ECO:0000255" key="1">
    <source>
        <dbReference type="HAMAP-Rule" id="MF_02011"/>
    </source>
</evidence>
<reference key="1">
    <citation type="journal article" date="2006" name="Proc. Natl. Acad. Sci. U.S.A.">
        <title>Molecular genetic anatomy of inter- and intraserotype variation in the human bacterial pathogen group A Streptococcus.</title>
        <authorList>
            <person name="Beres S.B."/>
            <person name="Richter E.W."/>
            <person name="Nagiec M.J."/>
            <person name="Sumby P."/>
            <person name="Porcella S.F."/>
            <person name="DeLeo F.R."/>
            <person name="Musser J.M."/>
        </authorList>
    </citation>
    <scope>NUCLEOTIDE SEQUENCE [LARGE SCALE GENOMIC DNA]</scope>
    <source>
        <strain>MGAS9429</strain>
    </source>
</reference>
<organism>
    <name type="scientific">Streptococcus pyogenes serotype M12 (strain MGAS9429)</name>
    <dbReference type="NCBI Taxonomy" id="370551"/>
    <lineage>
        <taxon>Bacteria</taxon>
        <taxon>Bacillati</taxon>
        <taxon>Bacillota</taxon>
        <taxon>Bacilli</taxon>
        <taxon>Lactobacillales</taxon>
        <taxon>Streptococcaceae</taxon>
        <taxon>Streptococcus</taxon>
    </lineage>
</organism>
<feature type="chain" id="PRO_0000337958" description="Cell cycle protein GpsB">
    <location>
        <begin position="1"/>
        <end position="108"/>
    </location>
</feature>
<feature type="coiled-coil region" evidence="1">
    <location>
        <begin position="32"/>
        <end position="69"/>
    </location>
</feature>
<proteinExistence type="inferred from homology"/>
<sequence length="108" mass="12445">MTSIIYSPKDIFEQEFKTSMRGFDKKEVDEFLDNVIKDYENFNAQIEALKAENEALKKAKFQARNTVSATVQQPVPQPTRVAQSATNFDILKRISKLEKEVFGKQIIE</sequence>
<gene>
    <name evidence="1" type="primary">gpsB</name>
    <name type="ordered locus">MGAS9429_Spy1348</name>
</gene>
<protein>
    <recommendedName>
        <fullName evidence="1">Cell cycle protein GpsB</fullName>
    </recommendedName>
    <alternativeName>
        <fullName evidence="1">Guiding PBP1-shuttling protein</fullName>
    </alternativeName>
</protein>
<comment type="function">
    <text evidence="1">Divisome component that associates with the complex late in its assembly, after the Z-ring is formed, and is dependent on DivIC and PBP2B for its recruitment to the divisome. Together with EzrA, is a key component of the system that regulates PBP1 localization during cell cycle progression. Its main role could be the removal of PBP1 from the cell pole after pole maturation is completed. Also contributes to the recruitment of PBP1 to the division complex. Not essential for septum formation.</text>
</comment>
<comment type="subunit">
    <text evidence="1">Forms polymers through the coiled coil domains. Interacts with PBP1, MreC and EzrA.</text>
</comment>
<comment type="subcellular location">
    <subcellularLocation>
        <location evidence="1">Cytoplasm</location>
    </subcellularLocation>
    <text evidence="1">Shuttles between the lateral wall and the division site in a cell cycle-dependent manner.</text>
</comment>
<comment type="similarity">
    <text evidence="1">Belongs to the GpsB family.</text>
</comment>
<keyword id="KW-0131">Cell cycle</keyword>
<keyword id="KW-0132">Cell division</keyword>
<keyword id="KW-0133">Cell shape</keyword>
<keyword id="KW-0175">Coiled coil</keyword>
<keyword id="KW-0963">Cytoplasm</keyword>
<name>GPSB_STRPC</name>
<accession>Q1JKN4</accession>
<dbReference type="EMBL" id="CP000259">
    <property type="protein sequence ID" value="ABF32535.1"/>
    <property type="molecule type" value="Genomic_DNA"/>
</dbReference>
<dbReference type="RefSeq" id="WP_002983626.1">
    <property type="nucleotide sequence ID" value="NC_008021.1"/>
</dbReference>
<dbReference type="SMR" id="Q1JKN4"/>
<dbReference type="GeneID" id="69900485"/>
<dbReference type="KEGG" id="spk:MGAS9429_Spy1348"/>
<dbReference type="HOGENOM" id="CLU_140309_1_0_9"/>
<dbReference type="Proteomes" id="UP000002433">
    <property type="component" value="Chromosome"/>
</dbReference>
<dbReference type="GO" id="GO:0005737">
    <property type="term" value="C:cytoplasm"/>
    <property type="evidence" value="ECO:0007669"/>
    <property type="project" value="UniProtKB-SubCell"/>
</dbReference>
<dbReference type="GO" id="GO:0051301">
    <property type="term" value="P:cell division"/>
    <property type="evidence" value="ECO:0007669"/>
    <property type="project" value="UniProtKB-UniRule"/>
</dbReference>
<dbReference type="GO" id="GO:0008360">
    <property type="term" value="P:regulation of cell shape"/>
    <property type="evidence" value="ECO:0007669"/>
    <property type="project" value="UniProtKB-UniRule"/>
</dbReference>
<dbReference type="Gene3D" id="6.10.250.660">
    <property type="match status" value="1"/>
</dbReference>
<dbReference type="HAMAP" id="MF_02011">
    <property type="entry name" value="GpsB"/>
    <property type="match status" value="1"/>
</dbReference>
<dbReference type="InterPro" id="IPR011229">
    <property type="entry name" value="Cell_cycle_GpsB"/>
</dbReference>
<dbReference type="InterPro" id="IPR019933">
    <property type="entry name" value="DivIVA_domain"/>
</dbReference>
<dbReference type="InterPro" id="IPR007793">
    <property type="entry name" value="DivIVA_fam"/>
</dbReference>
<dbReference type="NCBIfam" id="TIGR03544">
    <property type="entry name" value="DivI1A_domain"/>
    <property type="match status" value="1"/>
</dbReference>
<dbReference type="NCBIfam" id="NF010725">
    <property type="entry name" value="PRK14127.1"/>
    <property type="match status" value="1"/>
</dbReference>
<dbReference type="PANTHER" id="PTHR35794:SF1">
    <property type="entry name" value="CELL CYCLE PROTEIN GPSB"/>
    <property type="match status" value="1"/>
</dbReference>
<dbReference type="PANTHER" id="PTHR35794">
    <property type="entry name" value="CELL DIVISION PROTEIN DIVIVA"/>
    <property type="match status" value="1"/>
</dbReference>
<dbReference type="Pfam" id="PF05103">
    <property type="entry name" value="DivIVA"/>
    <property type="match status" value="1"/>
</dbReference>
<dbReference type="PIRSF" id="PIRSF029938">
    <property type="entry name" value="UCP029938"/>
    <property type="match status" value="1"/>
</dbReference>